<accession>A1L1A6</accession>
<evidence type="ECO:0000250" key="1">
    <source>
        <dbReference type="UniProtKB" id="B2RTN2"/>
    </source>
</evidence>
<evidence type="ECO:0000255" key="2"/>
<evidence type="ECO:0000255" key="3">
    <source>
        <dbReference type="PROSITE-ProRule" id="PRU00114"/>
    </source>
</evidence>
<evidence type="ECO:0000256" key="4">
    <source>
        <dbReference type="SAM" id="MobiDB-lite"/>
    </source>
</evidence>
<evidence type="ECO:0000269" key="5">
    <source>
    </source>
</evidence>
<evidence type="ECO:0000305" key="6"/>
<evidence type="ECO:0000312" key="7">
    <source>
        <dbReference type="HGNC" id="HGNC:40040"/>
    </source>
</evidence>
<feature type="chain" id="PRO_0000410772" description="Immunoglobulin superfamily member 23">
    <location>
        <begin position="1"/>
        <end position="192"/>
    </location>
</feature>
<feature type="transmembrane region" description="Helical" evidence="2">
    <location>
        <begin position="158"/>
        <end position="178"/>
    </location>
</feature>
<feature type="domain" description="Ig-like" evidence="3">
    <location>
        <begin position="20"/>
        <end position="128"/>
    </location>
</feature>
<feature type="region of interest" description="Disordered" evidence="4">
    <location>
        <begin position="1"/>
        <end position="26"/>
    </location>
</feature>
<feature type="compositionally biased region" description="Pro residues" evidence="4">
    <location>
        <begin position="7"/>
        <end position="18"/>
    </location>
</feature>
<feature type="glycosylation site" description="N-linked (GlcNAc...) asparagine" evidence="2">
    <location>
        <position position="64"/>
    </location>
</feature>
<feature type="sequence variant" id="VAR_087628" description="Found in a patient with osteopetrosis; uncertain significance." evidence="5">
    <location>
        <begin position="99"/>
        <end position="192"/>
    </location>
</feature>
<gene>
    <name evidence="7" type="primary">IGSF23</name>
</gene>
<proteinExistence type="evidence at transcript level"/>
<dbReference type="EMBL" id="AC138472">
    <property type="status" value="NOT_ANNOTATED_CDS"/>
    <property type="molecule type" value="Genomic_DNA"/>
</dbReference>
<dbReference type="EMBL" id="BC127928">
    <property type="protein sequence ID" value="AAI27929.1"/>
    <property type="molecule type" value="mRNA"/>
</dbReference>
<dbReference type="EMBL" id="BC127929">
    <property type="protein sequence ID" value="AAI27930.1"/>
    <property type="molecule type" value="mRNA"/>
</dbReference>
<dbReference type="CCDS" id="CCDS54277.1"/>
<dbReference type="RefSeq" id="NP_001192209.1">
    <property type="nucleotide sequence ID" value="NM_001205280.2"/>
</dbReference>
<dbReference type="FunCoup" id="A1L1A6">
    <property type="interactions" value="57"/>
</dbReference>
<dbReference type="STRING" id="9606.ENSP00000385592"/>
<dbReference type="GlyCosmos" id="A1L1A6">
    <property type="glycosylation" value="1 site, No reported glycans"/>
</dbReference>
<dbReference type="GlyGen" id="A1L1A6">
    <property type="glycosylation" value="1 site"/>
</dbReference>
<dbReference type="BioMuta" id="IGSF23"/>
<dbReference type="jPOST" id="A1L1A6"/>
<dbReference type="PaxDb" id="9606-ENSP00000385592"/>
<dbReference type="Antibodypedia" id="70970">
    <property type="antibodies" value="8 antibodies from 4 providers"/>
</dbReference>
<dbReference type="DNASU" id="147710"/>
<dbReference type="Ensembl" id="ENST00000402988.6">
    <property type="protein sequence ID" value="ENSP00000385592.1"/>
    <property type="gene ID" value="ENSG00000216588.9"/>
</dbReference>
<dbReference type="GeneID" id="147710"/>
<dbReference type="KEGG" id="hsa:147710"/>
<dbReference type="MANE-Select" id="ENST00000402988.6">
    <property type="protein sequence ID" value="ENSP00000385592.1"/>
    <property type="RefSeq nucleotide sequence ID" value="NM_001205280.2"/>
    <property type="RefSeq protein sequence ID" value="NP_001192209.1"/>
</dbReference>
<dbReference type="UCSC" id="uc021uvj.1">
    <property type="organism name" value="human"/>
</dbReference>
<dbReference type="AGR" id="HGNC:40040"/>
<dbReference type="CTD" id="147710"/>
<dbReference type="DisGeNET" id="147710"/>
<dbReference type="GeneCards" id="IGSF23"/>
<dbReference type="HGNC" id="HGNC:40040">
    <property type="gene designation" value="IGSF23"/>
</dbReference>
<dbReference type="HPA" id="ENSG00000216588">
    <property type="expression patterns" value="Group enriched (intestine, liver)"/>
</dbReference>
<dbReference type="neXtProt" id="NX_A1L1A6"/>
<dbReference type="OpenTargets" id="ENSG00000216588"/>
<dbReference type="VEuPathDB" id="HostDB:ENSG00000216588"/>
<dbReference type="eggNOG" id="ENOG502RU2R">
    <property type="taxonomic scope" value="Eukaryota"/>
</dbReference>
<dbReference type="GeneTree" id="ENSGT00390000015308"/>
<dbReference type="InParanoid" id="A1L1A6"/>
<dbReference type="OMA" id="MRAKPQS"/>
<dbReference type="OrthoDB" id="10012075at2759"/>
<dbReference type="PAN-GO" id="A1L1A6">
    <property type="GO annotations" value="0 GO annotations based on evolutionary models"/>
</dbReference>
<dbReference type="TreeFam" id="TF339455"/>
<dbReference type="PathwayCommons" id="A1L1A6"/>
<dbReference type="SignaLink" id="A1L1A6"/>
<dbReference type="BioGRID-ORCS" id="147710">
    <property type="hits" value="8 hits in 1143 CRISPR screens"/>
</dbReference>
<dbReference type="ChiTaRS" id="IGSF23">
    <property type="organism name" value="human"/>
</dbReference>
<dbReference type="GenomeRNAi" id="147710"/>
<dbReference type="Pharos" id="A1L1A6">
    <property type="development level" value="Tdark"/>
</dbReference>
<dbReference type="PRO" id="PR:A1L1A6"/>
<dbReference type="Proteomes" id="UP000005640">
    <property type="component" value="Chromosome 19"/>
</dbReference>
<dbReference type="RNAct" id="A1L1A6">
    <property type="molecule type" value="protein"/>
</dbReference>
<dbReference type="Bgee" id="ENSG00000216588">
    <property type="expression patterns" value="Expressed in primordial germ cell in gonad and 79 other cell types or tissues"/>
</dbReference>
<dbReference type="ExpressionAtlas" id="A1L1A6">
    <property type="expression patterns" value="baseline and differential"/>
</dbReference>
<dbReference type="GO" id="GO:0005886">
    <property type="term" value="C:plasma membrane"/>
    <property type="evidence" value="ECO:0000314"/>
    <property type="project" value="UniProtKB"/>
</dbReference>
<dbReference type="GO" id="GO:0030316">
    <property type="term" value="P:osteoclast differentiation"/>
    <property type="evidence" value="ECO:0000314"/>
    <property type="project" value="UniProtKB"/>
</dbReference>
<dbReference type="Gene3D" id="2.60.40.10">
    <property type="entry name" value="Immunoglobulins"/>
    <property type="match status" value="1"/>
</dbReference>
<dbReference type="InterPro" id="IPR007110">
    <property type="entry name" value="Ig-like_dom"/>
</dbReference>
<dbReference type="InterPro" id="IPR036179">
    <property type="entry name" value="Ig-like_dom_sf"/>
</dbReference>
<dbReference type="InterPro" id="IPR013783">
    <property type="entry name" value="Ig-like_fold"/>
</dbReference>
<dbReference type="SUPFAM" id="SSF48726">
    <property type="entry name" value="Immunoglobulin"/>
    <property type="match status" value="1"/>
</dbReference>
<dbReference type="PROSITE" id="PS50835">
    <property type="entry name" value="IG_LIKE"/>
    <property type="match status" value="1"/>
</dbReference>
<comment type="function">
    <text evidence="1">May be involved in osteoclast differentiation.</text>
</comment>
<comment type="subcellular location">
    <subcellularLocation>
        <location evidence="5">Cell membrane</location>
        <topology evidence="2">Single-pass membrane protein</topology>
    </subcellularLocation>
</comment>
<comment type="tissue specificity">
    <text evidence="5">Expressed in bone and small intestine (PubMed:31560140). Highly expressed in osteoclasts, and low expressed in osteoblasts and peripheral blood mononuclear cells (PBMCs) (PubMed:31560140).</text>
</comment>
<keyword id="KW-1003">Cell membrane</keyword>
<keyword id="KW-0325">Glycoprotein</keyword>
<keyword id="KW-0393">Immunoglobulin domain</keyword>
<keyword id="KW-0472">Membrane</keyword>
<keyword id="KW-1185">Reference proteome</keyword>
<keyword id="KW-0812">Transmembrane</keyword>
<keyword id="KW-1133">Transmembrane helix</keyword>
<name>IGS23_HUMAN</name>
<protein>
    <recommendedName>
        <fullName evidence="6">Immunoglobulin superfamily member 23</fullName>
    </recommendedName>
</protein>
<organism>
    <name type="scientific">Homo sapiens</name>
    <name type="common">Human</name>
    <dbReference type="NCBI Taxonomy" id="9606"/>
    <lineage>
        <taxon>Eukaryota</taxon>
        <taxon>Metazoa</taxon>
        <taxon>Chordata</taxon>
        <taxon>Craniata</taxon>
        <taxon>Vertebrata</taxon>
        <taxon>Euteleostomi</taxon>
        <taxon>Mammalia</taxon>
        <taxon>Eutheria</taxon>
        <taxon>Euarchontoglires</taxon>
        <taxon>Primates</taxon>
        <taxon>Haplorrhini</taxon>
        <taxon>Catarrhini</taxon>
        <taxon>Hominidae</taxon>
        <taxon>Homo</taxon>
    </lineage>
</organism>
<sequence length="192" mass="20591">MRAKPQSPLPRNPVPAWSPPTTTTDPMLEKDAAGGDFPANLVLQLMPLKTFPAAIRGVIQSELNYSVILQWVVTMDPEPVLSWTFSGVPCGMGEKLFIRRLSCEQLGTYMCIATNSKKQLVSEPVTISLPKPIMQPTEAEPMEPDPTLSLSGGSAIGLLAAGILGAGALIAGMCFIIIQSLRTDRQRIGICS</sequence>
<reference key="1">
    <citation type="journal article" date="2004" name="Nature">
        <title>The DNA sequence and biology of human chromosome 19.</title>
        <authorList>
            <person name="Grimwood J."/>
            <person name="Gordon L.A."/>
            <person name="Olsen A.S."/>
            <person name="Terry A."/>
            <person name="Schmutz J."/>
            <person name="Lamerdin J.E."/>
            <person name="Hellsten U."/>
            <person name="Goodstein D."/>
            <person name="Couronne O."/>
            <person name="Tran-Gyamfi M."/>
            <person name="Aerts A."/>
            <person name="Altherr M."/>
            <person name="Ashworth L."/>
            <person name="Bajorek E."/>
            <person name="Black S."/>
            <person name="Branscomb E."/>
            <person name="Caenepeel S."/>
            <person name="Carrano A.V."/>
            <person name="Caoile C."/>
            <person name="Chan Y.M."/>
            <person name="Christensen M."/>
            <person name="Cleland C.A."/>
            <person name="Copeland A."/>
            <person name="Dalin E."/>
            <person name="Dehal P."/>
            <person name="Denys M."/>
            <person name="Detter J.C."/>
            <person name="Escobar J."/>
            <person name="Flowers D."/>
            <person name="Fotopulos D."/>
            <person name="Garcia C."/>
            <person name="Georgescu A.M."/>
            <person name="Glavina T."/>
            <person name="Gomez M."/>
            <person name="Gonzales E."/>
            <person name="Groza M."/>
            <person name="Hammon N."/>
            <person name="Hawkins T."/>
            <person name="Haydu L."/>
            <person name="Ho I."/>
            <person name="Huang W."/>
            <person name="Israni S."/>
            <person name="Jett J."/>
            <person name="Kadner K."/>
            <person name="Kimball H."/>
            <person name="Kobayashi A."/>
            <person name="Larionov V."/>
            <person name="Leem S.-H."/>
            <person name="Lopez F."/>
            <person name="Lou Y."/>
            <person name="Lowry S."/>
            <person name="Malfatti S."/>
            <person name="Martinez D."/>
            <person name="McCready P.M."/>
            <person name="Medina C."/>
            <person name="Morgan J."/>
            <person name="Nelson K."/>
            <person name="Nolan M."/>
            <person name="Ovcharenko I."/>
            <person name="Pitluck S."/>
            <person name="Pollard M."/>
            <person name="Popkie A.P."/>
            <person name="Predki P."/>
            <person name="Quan G."/>
            <person name="Ramirez L."/>
            <person name="Rash S."/>
            <person name="Retterer J."/>
            <person name="Rodriguez A."/>
            <person name="Rogers S."/>
            <person name="Salamov A."/>
            <person name="Salazar A."/>
            <person name="She X."/>
            <person name="Smith D."/>
            <person name="Slezak T."/>
            <person name="Solovyev V."/>
            <person name="Thayer N."/>
            <person name="Tice H."/>
            <person name="Tsai M."/>
            <person name="Ustaszewska A."/>
            <person name="Vo N."/>
            <person name="Wagner M."/>
            <person name="Wheeler J."/>
            <person name="Wu K."/>
            <person name="Xie G."/>
            <person name="Yang J."/>
            <person name="Dubchak I."/>
            <person name="Furey T.S."/>
            <person name="DeJong P."/>
            <person name="Dickson M."/>
            <person name="Gordon D."/>
            <person name="Eichler E.E."/>
            <person name="Pennacchio L.A."/>
            <person name="Richardson P."/>
            <person name="Stubbs L."/>
            <person name="Rokhsar D.S."/>
            <person name="Myers R.M."/>
            <person name="Rubin E.M."/>
            <person name="Lucas S.M."/>
        </authorList>
    </citation>
    <scope>NUCLEOTIDE SEQUENCE [LARGE SCALE GENOMIC DNA]</scope>
</reference>
<reference key="2">
    <citation type="journal article" date="2004" name="Genome Res.">
        <title>The status, quality, and expansion of the NIH full-length cDNA project: the Mammalian Gene Collection (MGC).</title>
        <authorList>
            <consortium name="The MGC Project Team"/>
        </authorList>
    </citation>
    <scope>NUCLEOTIDE SEQUENCE [LARGE SCALE MRNA]</scope>
</reference>
<reference key="3">
    <citation type="journal article" date="2019" name="Cell Prolif.">
        <title>Osteoclastogenesis inhibition by mutated IGSF23 results in human osteopetrosis.</title>
        <authorList>
            <person name="Yuan Y."/>
            <person name="Yang L."/>
            <person name="Liu T."/>
            <person name="Zhang H."/>
            <person name="Lu Q."/>
        </authorList>
    </citation>
    <scope>TISSUE SPECIFICITY</scope>
    <scope>SUBCELLULAR LOCATION</scope>
    <scope>VARIANT 99-ARG--SER-192 DEL</scope>
</reference>